<sequence length="250" mass="28228">MANIHIVIPARLKSTRLPNKMLADIAGKPMIQRVYEQVTKSKFDSIIIATDSQKIKDIAESFGAKVVLTRDDHQSGTDRIAEAVTKLGFADEDIVVNVQGDEPLIPIENIEQAAQLLIDKSEAVVSTLCEKITDVEDIYNPNNVKVVFDKNNYALYFSRASIPFERGFSEKEQINISEFFRHIGIYAYRVAFLKHYAELTVSPIEKYEALEQLRVLYNGYKIAIEQSAKSTPAGVDTLQDLEKVRKLFNV</sequence>
<dbReference type="EC" id="2.7.7.38" evidence="1"/>
<dbReference type="EMBL" id="CP000437">
    <property type="protein sequence ID" value="ABI83186.1"/>
    <property type="molecule type" value="Genomic_DNA"/>
</dbReference>
<dbReference type="RefSeq" id="WP_003025579.1">
    <property type="nucleotide sequence ID" value="NC_017463.1"/>
</dbReference>
<dbReference type="SMR" id="Q0BL48"/>
<dbReference type="KEGG" id="fth:FTH_1361"/>
<dbReference type="UniPathway" id="UPA00030"/>
<dbReference type="UniPathway" id="UPA00358">
    <property type="reaction ID" value="UER00476"/>
</dbReference>
<dbReference type="GO" id="GO:0005829">
    <property type="term" value="C:cytosol"/>
    <property type="evidence" value="ECO:0007669"/>
    <property type="project" value="TreeGrafter"/>
</dbReference>
<dbReference type="GO" id="GO:0008690">
    <property type="term" value="F:3-deoxy-manno-octulosonate cytidylyltransferase activity"/>
    <property type="evidence" value="ECO:0007669"/>
    <property type="project" value="UniProtKB-UniRule"/>
</dbReference>
<dbReference type="GO" id="GO:0033468">
    <property type="term" value="P:CMP-keto-3-deoxy-D-manno-octulosonic acid biosynthetic process"/>
    <property type="evidence" value="ECO:0007669"/>
    <property type="project" value="UniProtKB-UniRule"/>
</dbReference>
<dbReference type="GO" id="GO:0009103">
    <property type="term" value="P:lipopolysaccharide biosynthetic process"/>
    <property type="evidence" value="ECO:0007669"/>
    <property type="project" value="UniProtKB-UniRule"/>
</dbReference>
<dbReference type="CDD" id="cd02517">
    <property type="entry name" value="CMP-KDO-Synthetase"/>
    <property type="match status" value="1"/>
</dbReference>
<dbReference type="FunFam" id="3.90.550.10:FF:000011">
    <property type="entry name" value="3-deoxy-manno-octulosonate cytidylyltransferase"/>
    <property type="match status" value="1"/>
</dbReference>
<dbReference type="Gene3D" id="3.90.550.10">
    <property type="entry name" value="Spore Coat Polysaccharide Biosynthesis Protein SpsA, Chain A"/>
    <property type="match status" value="1"/>
</dbReference>
<dbReference type="HAMAP" id="MF_00057">
    <property type="entry name" value="KdsB"/>
    <property type="match status" value="1"/>
</dbReference>
<dbReference type="InterPro" id="IPR003329">
    <property type="entry name" value="Cytidylyl_trans"/>
</dbReference>
<dbReference type="InterPro" id="IPR004528">
    <property type="entry name" value="KdsB"/>
</dbReference>
<dbReference type="InterPro" id="IPR029044">
    <property type="entry name" value="Nucleotide-diphossugar_trans"/>
</dbReference>
<dbReference type="NCBIfam" id="TIGR00466">
    <property type="entry name" value="kdsB"/>
    <property type="match status" value="1"/>
</dbReference>
<dbReference type="NCBIfam" id="NF003950">
    <property type="entry name" value="PRK05450.1-3"/>
    <property type="match status" value="1"/>
</dbReference>
<dbReference type="NCBIfam" id="NF003952">
    <property type="entry name" value="PRK05450.1-5"/>
    <property type="match status" value="1"/>
</dbReference>
<dbReference type="NCBIfam" id="NF009905">
    <property type="entry name" value="PRK13368.1"/>
    <property type="match status" value="1"/>
</dbReference>
<dbReference type="PANTHER" id="PTHR42866">
    <property type="entry name" value="3-DEOXY-MANNO-OCTULOSONATE CYTIDYLYLTRANSFERASE"/>
    <property type="match status" value="1"/>
</dbReference>
<dbReference type="PANTHER" id="PTHR42866:SF2">
    <property type="entry name" value="3-DEOXY-MANNO-OCTULOSONATE CYTIDYLYLTRANSFERASE, MITOCHONDRIAL"/>
    <property type="match status" value="1"/>
</dbReference>
<dbReference type="Pfam" id="PF02348">
    <property type="entry name" value="CTP_transf_3"/>
    <property type="match status" value="1"/>
</dbReference>
<dbReference type="SUPFAM" id="SSF53448">
    <property type="entry name" value="Nucleotide-diphospho-sugar transferases"/>
    <property type="match status" value="1"/>
</dbReference>
<evidence type="ECO:0000255" key="1">
    <source>
        <dbReference type="HAMAP-Rule" id="MF_00057"/>
    </source>
</evidence>
<comment type="function">
    <text evidence="1">Activates KDO (a required 8-carbon sugar) for incorporation into bacterial lipopolysaccharide in Gram-negative bacteria.</text>
</comment>
<comment type="catalytic activity">
    <reaction evidence="1">
        <text>3-deoxy-alpha-D-manno-oct-2-ulosonate + CTP = CMP-3-deoxy-beta-D-manno-octulosonate + diphosphate</text>
        <dbReference type="Rhea" id="RHEA:23448"/>
        <dbReference type="ChEBI" id="CHEBI:33019"/>
        <dbReference type="ChEBI" id="CHEBI:37563"/>
        <dbReference type="ChEBI" id="CHEBI:85986"/>
        <dbReference type="ChEBI" id="CHEBI:85987"/>
        <dbReference type="EC" id="2.7.7.38"/>
    </reaction>
</comment>
<comment type="pathway">
    <text evidence="1">Nucleotide-sugar biosynthesis; CMP-3-deoxy-D-manno-octulosonate biosynthesis; CMP-3-deoxy-D-manno-octulosonate from 3-deoxy-D-manno-octulosonate and CTP: step 1/1.</text>
</comment>
<comment type="pathway">
    <text evidence="1">Bacterial outer membrane biogenesis; lipopolysaccharide biosynthesis.</text>
</comment>
<comment type="subcellular location">
    <subcellularLocation>
        <location evidence="1">Cytoplasm</location>
    </subcellularLocation>
</comment>
<comment type="similarity">
    <text evidence="1">Belongs to the KdsB family.</text>
</comment>
<gene>
    <name evidence="1" type="primary">kdsB</name>
    <name type="ordered locus">FTH_1361</name>
</gene>
<protein>
    <recommendedName>
        <fullName evidence="1">3-deoxy-manno-octulosonate cytidylyltransferase</fullName>
        <ecNumber evidence="1">2.7.7.38</ecNumber>
    </recommendedName>
    <alternativeName>
        <fullName evidence="1">CMP-2-keto-3-deoxyoctulosonic acid synthase</fullName>
        <shortName evidence="1">CKS</shortName>
        <shortName evidence="1">CMP-KDO synthase</shortName>
    </alternativeName>
</protein>
<organism>
    <name type="scientific">Francisella tularensis subsp. holarctica (strain OSU18)</name>
    <dbReference type="NCBI Taxonomy" id="393011"/>
    <lineage>
        <taxon>Bacteria</taxon>
        <taxon>Pseudomonadati</taxon>
        <taxon>Pseudomonadota</taxon>
        <taxon>Gammaproteobacteria</taxon>
        <taxon>Thiotrichales</taxon>
        <taxon>Francisellaceae</taxon>
        <taxon>Francisella</taxon>
    </lineage>
</organism>
<keyword id="KW-0963">Cytoplasm</keyword>
<keyword id="KW-0448">Lipopolysaccharide biosynthesis</keyword>
<keyword id="KW-0548">Nucleotidyltransferase</keyword>
<keyword id="KW-0808">Transferase</keyword>
<reference key="1">
    <citation type="journal article" date="2006" name="J. Bacteriol.">
        <title>Chromosome rearrangement and diversification of Francisella tularensis revealed by the type B (OSU18) genome sequence.</title>
        <authorList>
            <person name="Petrosino J.F."/>
            <person name="Xiang Q."/>
            <person name="Karpathy S.E."/>
            <person name="Jiang H."/>
            <person name="Yerrapragada S."/>
            <person name="Liu Y."/>
            <person name="Gioia J."/>
            <person name="Hemphill L."/>
            <person name="Gonzalez A."/>
            <person name="Raghavan T.M."/>
            <person name="Uzman A."/>
            <person name="Fox G.E."/>
            <person name="Highlander S."/>
            <person name="Reichard M."/>
            <person name="Morton R.J."/>
            <person name="Clinkenbeard K.D."/>
            <person name="Weinstock G.M."/>
        </authorList>
    </citation>
    <scope>NUCLEOTIDE SEQUENCE [LARGE SCALE GENOMIC DNA]</scope>
    <source>
        <strain>OSU18</strain>
    </source>
</reference>
<proteinExistence type="inferred from homology"/>
<feature type="chain" id="PRO_0000370068" description="3-deoxy-manno-octulosonate cytidylyltransferase">
    <location>
        <begin position="1"/>
        <end position="250"/>
    </location>
</feature>
<name>KDSB_FRATO</name>
<accession>Q0BL48</accession>